<comment type="function">
    <text evidence="2">Catalyzes the reversible epimerization of D-ribulose 5-phosphate to D-xylulose 5-phosphate.</text>
</comment>
<comment type="catalytic activity">
    <reaction evidence="2">
        <text>D-ribulose 5-phosphate = D-xylulose 5-phosphate</text>
        <dbReference type="Rhea" id="RHEA:13677"/>
        <dbReference type="ChEBI" id="CHEBI:57737"/>
        <dbReference type="ChEBI" id="CHEBI:58121"/>
        <dbReference type="EC" id="5.1.3.1"/>
    </reaction>
</comment>
<comment type="cofactor">
    <cofactor evidence="2">
        <name>Co(2+)</name>
        <dbReference type="ChEBI" id="CHEBI:48828"/>
    </cofactor>
    <cofactor evidence="2">
        <name>Fe(2+)</name>
        <dbReference type="ChEBI" id="CHEBI:29033"/>
    </cofactor>
    <cofactor evidence="2">
        <name>Mn(2+)</name>
        <dbReference type="ChEBI" id="CHEBI:29035"/>
    </cofactor>
    <cofactor evidence="2">
        <name>Zn(2+)</name>
        <dbReference type="ChEBI" id="CHEBI:29105"/>
    </cofactor>
    <text evidence="2">Binds 1 divalent metal cation per subunit. Active with Co(2+), Fe(2+), Mn(2+) and Zn(2+).</text>
</comment>
<comment type="pathway">
    <text>Carbohydrate degradation; pentose phosphate pathway; D-xylulose 5-phosphate from D-ribulose 5-phosphate (non-oxidative stage): step 1/1.</text>
</comment>
<comment type="similarity">
    <text evidence="3">Belongs to the ribulose-phosphate 3-epimerase family.</text>
</comment>
<proteinExistence type="inferred from homology"/>
<sequence length="213" mass="23808">MLKKRIGISILDCNFGNLEEELGELKRNGVTNIHLDVMDTTFVKNITFGPCIINRILEHDFVFDVHMMVESPLDIIMQIDLERVSLVTIHSEVCDKAGVAEYLRKRNVLFGIALNPETQVDDAEMRSADFVLIMSVKPGFGGQKFQEECLAKVEEVRRYGKMVGIDGGIEMSNIGRITGADYAVVGSGYFRSGDRKKFLRDITDEFLCGSCSG</sequence>
<organism>
    <name type="scientific">Encephalitozoon cuniculi (strain GB-M1)</name>
    <name type="common">Microsporidian parasite</name>
    <dbReference type="NCBI Taxonomy" id="284813"/>
    <lineage>
        <taxon>Eukaryota</taxon>
        <taxon>Fungi</taxon>
        <taxon>Fungi incertae sedis</taxon>
        <taxon>Microsporidia</taxon>
        <taxon>Unikaryonidae</taxon>
        <taxon>Encephalitozoon</taxon>
    </lineage>
</organism>
<accession>Q8SRP6</accession>
<reference key="1">
    <citation type="journal article" date="2001" name="Nature">
        <title>Genome sequence and gene compaction of the eukaryote parasite Encephalitozoon cuniculi.</title>
        <authorList>
            <person name="Katinka M.D."/>
            <person name="Duprat S."/>
            <person name="Cornillot E."/>
            <person name="Metenier G."/>
            <person name="Thomarat F."/>
            <person name="Prensier G."/>
            <person name="Barbe V."/>
            <person name="Peyretaillade E."/>
            <person name="Brottier P."/>
            <person name="Wincker P."/>
            <person name="Delbac F."/>
            <person name="El Alaoui H."/>
            <person name="Peyret P."/>
            <person name="Saurin W."/>
            <person name="Gouy M."/>
            <person name="Weissenbach J."/>
            <person name="Vivares C.P."/>
        </authorList>
    </citation>
    <scope>NUCLEOTIDE SEQUENCE [LARGE SCALE GENOMIC DNA]</scope>
    <source>
        <strain>GB-M1</strain>
    </source>
</reference>
<reference key="2">
    <citation type="journal article" date="2009" name="BMC Genomics">
        <title>Identification of transcriptional signals in Encephalitozoon cuniculi widespread among Microsporidia phylum: support for accurate structural genome annotation.</title>
        <authorList>
            <person name="Peyretaillade E."/>
            <person name="Goncalves O."/>
            <person name="Terrat S."/>
            <person name="Dugat-Bony E."/>
            <person name="Wincker P."/>
            <person name="Cornman R.S."/>
            <person name="Evans J.D."/>
            <person name="Delbac F."/>
            <person name="Peyret P."/>
        </authorList>
    </citation>
    <scope>GENOME REANNOTATION</scope>
    <source>
        <strain>GB-M1</strain>
    </source>
</reference>
<gene>
    <name type="primary">RPE1</name>
    <name type="ordered locus">ECU06_1040</name>
</gene>
<feature type="chain" id="PRO_0000171593" description="Ribulose-phosphate 3-epimerase">
    <location>
        <begin position="1"/>
        <end position="213"/>
    </location>
</feature>
<feature type="active site" description="Proton acceptor" evidence="1">
    <location>
        <position position="36"/>
    </location>
</feature>
<feature type="active site" description="Proton donor" evidence="1">
    <location>
        <position position="166"/>
    </location>
</feature>
<feature type="binding site" evidence="1">
    <location>
        <position position="9"/>
    </location>
    <ligand>
        <name>substrate</name>
    </ligand>
</feature>
<feature type="binding site" evidence="1">
    <location>
        <position position="34"/>
    </location>
    <ligand>
        <name>a divalent metal cation</name>
        <dbReference type="ChEBI" id="CHEBI:60240"/>
    </ligand>
</feature>
<feature type="binding site" evidence="1">
    <location>
        <position position="36"/>
    </location>
    <ligand>
        <name>a divalent metal cation</name>
        <dbReference type="ChEBI" id="CHEBI:60240"/>
    </ligand>
</feature>
<feature type="binding site" evidence="1">
    <location>
        <position position="66"/>
    </location>
    <ligand>
        <name>a divalent metal cation</name>
        <dbReference type="ChEBI" id="CHEBI:60240"/>
    </ligand>
</feature>
<feature type="binding site" evidence="1">
    <location>
        <position position="66"/>
    </location>
    <ligand>
        <name>substrate</name>
    </ligand>
</feature>
<feature type="binding site" evidence="1">
    <location>
        <begin position="139"/>
        <end position="142"/>
    </location>
    <ligand>
        <name>substrate</name>
    </ligand>
</feature>
<feature type="binding site" evidence="1">
    <location>
        <begin position="166"/>
        <end position="168"/>
    </location>
    <ligand>
        <name>substrate</name>
    </ligand>
</feature>
<feature type="binding site" evidence="1">
    <location>
        <position position="166"/>
    </location>
    <ligand>
        <name>a divalent metal cation</name>
        <dbReference type="ChEBI" id="CHEBI:60240"/>
    </ligand>
</feature>
<feature type="binding site" evidence="1">
    <location>
        <begin position="186"/>
        <end position="187"/>
    </location>
    <ligand>
        <name>substrate</name>
    </ligand>
</feature>
<name>RPE_ENCCU</name>
<evidence type="ECO:0000250" key="1">
    <source>
        <dbReference type="UniProtKB" id="P32719"/>
    </source>
</evidence>
<evidence type="ECO:0000250" key="2">
    <source>
        <dbReference type="UniProtKB" id="Q96AT9"/>
    </source>
</evidence>
<evidence type="ECO:0000305" key="3"/>
<protein>
    <recommendedName>
        <fullName>Ribulose-phosphate 3-epimerase</fullName>
        <ecNumber evidence="2">5.1.3.1</ecNumber>
    </recommendedName>
    <alternativeName>
        <fullName>Pentose-5-phosphate 3-epimerase</fullName>
        <shortName>PPE</shortName>
    </alternativeName>
    <alternativeName>
        <fullName>RPE</fullName>
    </alternativeName>
</protein>
<dbReference type="EC" id="5.1.3.1" evidence="2"/>
<dbReference type="EMBL" id="AL590446">
    <property type="protein sequence ID" value="CAD25464.2"/>
    <property type="molecule type" value="Genomic_DNA"/>
</dbReference>
<dbReference type="RefSeq" id="NP_585860.1">
    <property type="nucleotide sequence ID" value="NM_001041482.1"/>
</dbReference>
<dbReference type="SMR" id="Q8SRP6"/>
<dbReference type="FunCoup" id="Q8SRP6">
    <property type="interactions" value="139"/>
</dbReference>
<dbReference type="STRING" id="284813.Q8SRP6"/>
<dbReference type="GeneID" id="859285"/>
<dbReference type="KEGG" id="ecu:ECU06_1040"/>
<dbReference type="VEuPathDB" id="MicrosporidiaDB:ECU06_1040"/>
<dbReference type="HOGENOM" id="CLU_054856_2_2_1"/>
<dbReference type="InParanoid" id="Q8SRP6"/>
<dbReference type="OrthoDB" id="1927044at2759"/>
<dbReference type="UniPathway" id="UPA00115">
    <property type="reaction ID" value="UER00411"/>
</dbReference>
<dbReference type="Proteomes" id="UP000000819">
    <property type="component" value="Chromosome VI"/>
</dbReference>
<dbReference type="GO" id="GO:0004750">
    <property type="term" value="F:D-ribulose-phosphate 3-epimerase activity"/>
    <property type="evidence" value="ECO:0007669"/>
    <property type="project" value="UniProtKB-EC"/>
</dbReference>
<dbReference type="GO" id="GO:0046872">
    <property type="term" value="F:metal ion binding"/>
    <property type="evidence" value="ECO:0007669"/>
    <property type="project" value="UniProtKB-KW"/>
</dbReference>
<dbReference type="GO" id="GO:0005975">
    <property type="term" value="P:carbohydrate metabolic process"/>
    <property type="evidence" value="ECO:0007669"/>
    <property type="project" value="InterPro"/>
</dbReference>
<dbReference type="GO" id="GO:0006098">
    <property type="term" value="P:pentose-phosphate shunt"/>
    <property type="evidence" value="ECO:0007669"/>
    <property type="project" value="UniProtKB-UniPathway"/>
</dbReference>
<dbReference type="CDD" id="cd00429">
    <property type="entry name" value="RPE"/>
    <property type="match status" value="1"/>
</dbReference>
<dbReference type="Gene3D" id="3.20.20.70">
    <property type="entry name" value="Aldolase class I"/>
    <property type="match status" value="1"/>
</dbReference>
<dbReference type="HAMAP" id="MF_02227">
    <property type="entry name" value="RPE"/>
    <property type="match status" value="1"/>
</dbReference>
<dbReference type="InterPro" id="IPR013785">
    <property type="entry name" value="Aldolase_TIM"/>
</dbReference>
<dbReference type="InterPro" id="IPR026019">
    <property type="entry name" value="Ribul_P_3_epim"/>
</dbReference>
<dbReference type="InterPro" id="IPR000056">
    <property type="entry name" value="Ribul_P_3_epim-like"/>
</dbReference>
<dbReference type="InterPro" id="IPR011060">
    <property type="entry name" value="RibuloseP-bd_barrel"/>
</dbReference>
<dbReference type="NCBIfam" id="NF004076">
    <property type="entry name" value="PRK05581.1-4"/>
    <property type="match status" value="1"/>
</dbReference>
<dbReference type="PANTHER" id="PTHR11749">
    <property type="entry name" value="RIBULOSE-5-PHOSPHATE-3-EPIMERASE"/>
    <property type="match status" value="1"/>
</dbReference>
<dbReference type="Pfam" id="PF00834">
    <property type="entry name" value="Ribul_P_3_epim"/>
    <property type="match status" value="1"/>
</dbReference>
<dbReference type="SUPFAM" id="SSF51366">
    <property type="entry name" value="Ribulose-phoshate binding barrel"/>
    <property type="match status" value="1"/>
</dbReference>
<dbReference type="PROSITE" id="PS01085">
    <property type="entry name" value="RIBUL_P_3_EPIMER_1"/>
    <property type="match status" value="1"/>
</dbReference>
<dbReference type="PROSITE" id="PS01086">
    <property type="entry name" value="RIBUL_P_3_EPIMER_2"/>
    <property type="match status" value="1"/>
</dbReference>
<keyword id="KW-0119">Carbohydrate metabolism</keyword>
<keyword id="KW-0170">Cobalt</keyword>
<keyword id="KW-0408">Iron</keyword>
<keyword id="KW-0413">Isomerase</keyword>
<keyword id="KW-0464">Manganese</keyword>
<keyword id="KW-0479">Metal-binding</keyword>
<keyword id="KW-1185">Reference proteome</keyword>
<keyword id="KW-0862">Zinc</keyword>